<sequence>MSSAPNIFLSAGEASGEHYGAALIPALRALYADARFFGLGGQRMQALGMERIVRAEDVAVMGITEVVRHLPRIYGEYLKLKRSIIERKPDLAILIDFPDVNLSLARTLHEQGTPVLYFVSPQLWAWKKYRIRKVQRYVDRMLVIFPFEEAFYQGHGVQADFVGHPLTEVPLPTITRAEFAAAHHLDPAKHWVGLLPGSRGKEIRLNLPEMIAAAKQLGHEHEYVLPLAPTLTEAQRGHVRQMLAALTASAHDAAHDQAPRITVVADARATLHHARASIVASGTATVEAALIGNPFVVVYRVSPLSYAIARRVVTVPHVAMANLIADRRVVPELIQDDFTAANIVREMQPLVASDRAREQMMTGLAEVRAKLSTPGSSAIARVTKVAHEMLQRRAALSRVR</sequence>
<gene>
    <name evidence="1" type="primary">lpxB</name>
    <name type="ordered locus">ACP_3488</name>
</gene>
<organism>
    <name type="scientific">Acidobacterium capsulatum (strain ATCC 51196 / DSM 11244 / BCRC 80197 / JCM 7670 / NBRC 15755 / NCIMB 13165 / 161)</name>
    <dbReference type="NCBI Taxonomy" id="240015"/>
    <lineage>
        <taxon>Bacteria</taxon>
        <taxon>Pseudomonadati</taxon>
        <taxon>Acidobacteriota</taxon>
        <taxon>Terriglobia</taxon>
        <taxon>Terriglobales</taxon>
        <taxon>Acidobacteriaceae</taxon>
        <taxon>Acidobacterium</taxon>
    </lineage>
</organism>
<keyword id="KW-0328">Glycosyltransferase</keyword>
<keyword id="KW-0441">Lipid A biosynthesis</keyword>
<keyword id="KW-0444">Lipid biosynthesis</keyword>
<keyword id="KW-0443">Lipid metabolism</keyword>
<keyword id="KW-1185">Reference proteome</keyword>
<keyword id="KW-0808">Transferase</keyword>
<proteinExistence type="inferred from homology"/>
<evidence type="ECO:0000255" key="1">
    <source>
        <dbReference type="HAMAP-Rule" id="MF_00392"/>
    </source>
</evidence>
<accession>C1F718</accession>
<dbReference type="EC" id="2.4.1.182" evidence="1"/>
<dbReference type="EMBL" id="CP001472">
    <property type="protein sequence ID" value="ACO32014.1"/>
    <property type="molecule type" value="Genomic_DNA"/>
</dbReference>
<dbReference type="RefSeq" id="WP_015898516.1">
    <property type="nucleotide sequence ID" value="NC_012483.1"/>
</dbReference>
<dbReference type="SMR" id="C1F718"/>
<dbReference type="FunCoup" id="C1F718">
    <property type="interactions" value="283"/>
</dbReference>
<dbReference type="STRING" id="240015.ACP_3488"/>
<dbReference type="CAZy" id="GT19">
    <property type="family name" value="Glycosyltransferase Family 19"/>
</dbReference>
<dbReference type="KEGG" id="aca:ACP_3488"/>
<dbReference type="eggNOG" id="COG0763">
    <property type="taxonomic scope" value="Bacteria"/>
</dbReference>
<dbReference type="HOGENOM" id="CLU_036577_3_1_0"/>
<dbReference type="InParanoid" id="C1F718"/>
<dbReference type="OrthoDB" id="9801642at2"/>
<dbReference type="UniPathway" id="UPA00973"/>
<dbReference type="Proteomes" id="UP000002207">
    <property type="component" value="Chromosome"/>
</dbReference>
<dbReference type="GO" id="GO:0016020">
    <property type="term" value="C:membrane"/>
    <property type="evidence" value="ECO:0007669"/>
    <property type="project" value="GOC"/>
</dbReference>
<dbReference type="GO" id="GO:0008915">
    <property type="term" value="F:lipid-A-disaccharide synthase activity"/>
    <property type="evidence" value="ECO:0007669"/>
    <property type="project" value="UniProtKB-UniRule"/>
</dbReference>
<dbReference type="GO" id="GO:0005543">
    <property type="term" value="F:phospholipid binding"/>
    <property type="evidence" value="ECO:0007669"/>
    <property type="project" value="TreeGrafter"/>
</dbReference>
<dbReference type="GO" id="GO:0009245">
    <property type="term" value="P:lipid A biosynthetic process"/>
    <property type="evidence" value="ECO:0007669"/>
    <property type="project" value="UniProtKB-UniRule"/>
</dbReference>
<dbReference type="HAMAP" id="MF_00392">
    <property type="entry name" value="LpxB"/>
    <property type="match status" value="1"/>
</dbReference>
<dbReference type="InterPro" id="IPR003835">
    <property type="entry name" value="Glyco_trans_19"/>
</dbReference>
<dbReference type="NCBIfam" id="TIGR00215">
    <property type="entry name" value="lpxB"/>
    <property type="match status" value="1"/>
</dbReference>
<dbReference type="PANTHER" id="PTHR30372">
    <property type="entry name" value="LIPID-A-DISACCHARIDE SYNTHASE"/>
    <property type="match status" value="1"/>
</dbReference>
<dbReference type="PANTHER" id="PTHR30372:SF4">
    <property type="entry name" value="LIPID-A-DISACCHARIDE SYNTHASE, MITOCHONDRIAL-RELATED"/>
    <property type="match status" value="1"/>
</dbReference>
<dbReference type="Pfam" id="PF02684">
    <property type="entry name" value="LpxB"/>
    <property type="match status" value="1"/>
</dbReference>
<dbReference type="SUPFAM" id="SSF53756">
    <property type="entry name" value="UDP-Glycosyltransferase/glycogen phosphorylase"/>
    <property type="match status" value="1"/>
</dbReference>
<comment type="function">
    <text evidence="1">Condensation of UDP-2,3-diacylglucosamine and 2,3-diacylglucosamine-1-phosphate to form lipid A disaccharide, a precursor of lipid A, a phosphorylated glycolipid that anchors the lipopolysaccharide to the outer membrane of the cell.</text>
</comment>
<comment type="catalytic activity">
    <reaction evidence="1">
        <text>a lipid X + a UDP-2-N,3-O-bis[(3R)-3-hydroxyacyl]-alpha-D-glucosamine = a lipid A disaccharide + UDP + H(+)</text>
        <dbReference type="Rhea" id="RHEA:67828"/>
        <dbReference type="ChEBI" id="CHEBI:15378"/>
        <dbReference type="ChEBI" id="CHEBI:58223"/>
        <dbReference type="ChEBI" id="CHEBI:137748"/>
        <dbReference type="ChEBI" id="CHEBI:176338"/>
        <dbReference type="ChEBI" id="CHEBI:176343"/>
        <dbReference type="EC" id="2.4.1.182"/>
    </reaction>
</comment>
<comment type="pathway">
    <text evidence="1">Bacterial outer membrane biogenesis; LPS lipid A biosynthesis.</text>
</comment>
<comment type="similarity">
    <text evidence="1">Belongs to the LpxB family.</text>
</comment>
<feature type="chain" id="PRO_1000205842" description="Lipid-A-disaccharide synthase">
    <location>
        <begin position="1"/>
        <end position="400"/>
    </location>
</feature>
<name>LPXB_ACIC5</name>
<protein>
    <recommendedName>
        <fullName evidence="1">Lipid-A-disaccharide synthase</fullName>
        <ecNumber evidence="1">2.4.1.182</ecNumber>
    </recommendedName>
</protein>
<reference key="1">
    <citation type="journal article" date="2009" name="Appl. Environ. Microbiol.">
        <title>Three genomes from the phylum Acidobacteria provide insight into the lifestyles of these microorganisms in soils.</title>
        <authorList>
            <person name="Ward N.L."/>
            <person name="Challacombe J.F."/>
            <person name="Janssen P.H."/>
            <person name="Henrissat B."/>
            <person name="Coutinho P.M."/>
            <person name="Wu M."/>
            <person name="Xie G."/>
            <person name="Haft D.H."/>
            <person name="Sait M."/>
            <person name="Badger J."/>
            <person name="Barabote R.D."/>
            <person name="Bradley B."/>
            <person name="Brettin T.S."/>
            <person name="Brinkac L.M."/>
            <person name="Bruce D."/>
            <person name="Creasy T."/>
            <person name="Daugherty S.C."/>
            <person name="Davidsen T.M."/>
            <person name="DeBoy R.T."/>
            <person name="Detter J.C."/>
            <person name="Dodson R.J."/>
            <person name="Durkin A.S."/>
            <person name="Ganapathy A."/>
            <person name="Gwinn-Giglio M."/>
            <person name="Han C.S."/>
            <person name="Khouri H."/>
            <person name="Kiss H."/>
            <person name="Kothari S.P."/>
            <person name="Madupu R."/>
            <person name="Nelson K.E."/>
            <person name="Nelson W.C."/>
            <person name="Paulsen I."/>
            <person name="Penn K."/>
            <person name="Ren Q."/>
            <person name="Rosovitz M.J."/>
            <person name="Selengut J.D."/>
            <person name="Shrivastava S."/>
            <person name="Sullivan S.A."/>
            <person name="Tapia R."/>
            <person name="Thompson L.S."/>
            <person name="Watkins K.L."/>
            <person name="Yang Q."/>
            <person name="Yu C."/>
            <person name="Zafar N."/>
            <person name="Zhou L."/>
            <person name="Kuske C.R."/>
        </authorList>
    </citation>
    <scope>NUCLEOTIDE SEQUENCE [LARGE SCALE GENOMIC DNA]</scope>
    <source>
        <strain>ATCC 51196 / DSM 11244 / BCRC 80197 / JCM 7670 / NBRC 15755 / NCIMB 13165 / 161</strain>
    </source>
</reference>